<evidence type="ECO:0000255" key="1">
    <source>
        <dbReference type="HAMAP-Rule" id="MF_00061"/>
    </source>
</evidence>
<comment type="function">
    <text evidence="1">Catalyzes the phosphorylation of the position 2 hydroxy group of 4-diphosphocytidyl-2C-methyl-D-erythritol.</text>
</comment>
<comment type="catalytic activity">
    <reaction evidence="1">
        <text>4-CDP-2-C-methyl-D-erythritol + ATP = 4-CDP-2-C-methyl-D-erythritol 2-phosphate + ADP + H(+)</text>
        <dbReference type="Rhea" id="RHEA:18437"/>
        <dbReference type="ChEBI" id="CHEBI:15378"/>
        <dbReference type="ChEBI" id="CHEBI:30616"/>
        <dbReference type="ChEBI" id="CHEBI:57823"/>
        <dbReference type="ChEBI" id="CHEBI:57919"/>
        <dbReference type="ChEBI" id="CHEBI:456216"/>
        <dbReference type="EC" id="2.7.1.148"/>
    </reaction>
</comment>
<comment type="pathway">
    <text evidence="1">Isoprenoid biosynthesis; isopentenyl diphosphate biosynthesis via DXP pathway; isopentenyl diphosphate from 1-deoxy-D-xylulose 5-phosphate: step 3/6.</text>
</comment>
<comment type="similarity">
    <text evidence="1">Belongs to the GHMP kinase family. IspE subfamily.</text>
</comment>
<gene>
    <name evidence="1" type="primary">ispE</name>
    <name type="ordered locus">Clim_1700</name>
</gene>
<reference key="1">
    <citation type="submission" date="2008-05" db="EMBL/GenBank/DDBJ databases">
        <title>Complete sequence of Chlorobium limicola DSM 245.</title>
        <authorList>
            <consortium name="US DOE Joint Genome Institute"/>
            <person name="Lucas S."/>
            <person name="Copeland A."/>
            <person name="Lapidus A."/>
            <person name="Glavina del Rio T."/>
            <person name="Dalin E."/>
            <person name="Tice H."/>
            <person name="Bruce D."/>
            <person name="Goodwin L."/>
            <person name="Pitluck S."/>
            <person name="Schmutz J."/>
            <person name="Larimer F."/>
            <person name="Land M."/>
            <person name="Hauser L."/>
            <person name="Kyrpides N."/>
            <person name="Ovchinnikova G."/>
            <person name="Zhao F."/>
            <person name="Li T."/>
            <person name="Liu Z."/>
            <person name="Overmann J."/>
            <person name="Bryant D.A."/>
            <person name="Richardson P."/>
        </authorList>
    </citation>
    <scope>NUCLEOTIDE SEQUENCE [LARGE SCALE GENOMIC DNA]</scope>
    <source>
        <strain>DSM 245 / NBRC 103803 / 6330</strain>
    </source>
</reference>
<sequence length="288" mass="31582">MLPVSVKSFAKINLGLLITSKRSDGYHTLETVFAPIDWYDTLEFSPSDTLSMCCTDSALPVDENNLCMRAAKALQESAGCSTGVSITLDKRIPFGAGLGGGSSDAATVLGMLNEFWNVRASLADLHILAVRLGADVPYFLEMKGLAFAKGIGDELEDLSLRLPFHIVTVFPEVHISTVWAYKHFYPRFERTSPDLRPLVTALCLEGERSCLGAFENDFEPAVFDHYPGVKKVKQDLLDSGSFFASLSGSGSAVFGFFDKREDADDALMMMREQGFRTSITAPDFSMVR</sequence>
<accession>B3EE40</accession>
<protein>
    <recommendedName>
        <fullName evidence="1">4-diphosphocytidyl-2-C-methyl-D-erythritol kinase</fullName>
        <shortName evidence="1">CMK</shortName>
        <ecNumber evidence="1">2.7.1.148</ecNumber>
    </recommendedName>
    <alternativeName>
        <fullName evidence="1">4-(cytidine-5'-diphospho)-2-C-methyl-D-erythritol kinase</fullName>
    </alternativeName>
</protein>
<dbReference type="EC" id="2.7.1.148" evidence="1"/>
<dbReference type="EMBL" id="CP001097">
    <property type="protein sequence ID" value="ACD90742.1"/>
    <property type="molecule type" value="Genomic_DNA"/>
</dbReference>
<dbReference type="RefSeq" id="WP_012466615.1">
    <property type="nucleotide sequence ID" value="NC_010803.1"/>
</dbReference>
<dbReference type="SMR" id="B3EE40"/>
<dbReference type="STRING" id="290315.Clim_1700"/>
<dbReference type="KEGG" id="cli:Clim_1700"/>
<dbReference type="eggNOG" id="COG1947">
    <property type="taxonomic scope" value="Bacteria"/>
</dbReference>
<dbReference type="HOGENOM" id="CLU_053057_3_0_10"/>
<dbReference type="OrthoDB" id="9809438at2"/>
<dbReference type="UniPathway" id="UPA00056">
    <property type="reaction ID" value="UER00094"/>
</dbReference>
<dbReference type="Proteomes" id="UP000008841">
    <property type="component" value="Chromosome"/>
</dbReference>
<dbReference type="GO" id="GO:0050515">
    <property type="term" value="F:4-(cytidine 5'-diphospho)-2-C-methyl-D-erythritol kinase activity"/>
    <property type="evidence" value="ECO:0007669"/>
    <property type="project" value="UniProtKB-UniRule"/>
</dbReference>
<dbReference type="GO" id="GO:0005524">
    <property type="term" value="F:ATP binding"/>
    <property type="evidence" value="ECO:0007669"/>
    <property type="project" value="UniProtKB-UniRule"/>
</dbReference>
<dbReference type="GO" id="GO:0019288">
    <property type="term" value="P:isopentenyl diphosphate biosynthetic process, methylerythritol 4-phosphate pathway"/>
    <property type="evidence" value="ECO:0007669"/>
    <property type="project" value="UniProtKB-UniRule"/>
</dbReference>
<dbReference type="GO" id="GO:0016114">
    <property type="term" value="P:terpenoid biosynthetic process"/>
    <property type="evidence" value="ECO:0007669"/>
    <property type="project" value="InterPro"/>
</dbReference>
<dbReference type="Gene3D" id="3.30.230.10">
    <property type="match status" value="1"/>
</dbReference>
<dbReference type="Gene3D" id="3.30.70.890">
    <property type="entry name" value="GHMP kinase, C-terminal domain"/>
    <property type="match status" value="1"/>
</dbReference>
<dbReference type="HAMAP" id="MF_00061">
    <property type="entry name" value="IspE"/>
    <property type="match status" value="1"/>
</dbReference>
<dbReference type="InterPro" id="IPR013750">
    <property type="entry name" value="GHMP_kinase_C_dom"/>
</dbReference>
<dbReference type="InterPro" id="IPR036554">
    <property type="entry name" value="GHMP_kinase_C_sf"/>
</dbReference>
<dbReference type="InterPro" id="IPR006204">
    <property type="entry name" value="GHMP_kinase_N_dom"/>
</dbReference>
<dbReference type="InterPro" id="IPR004424">
    <property type="entry name" value="IspE"/>
</dbReference>
<dbReference type="InterPro" id="IPR020568">
    <property type="entry name" value="Ribosomal_Su5_D2-typ_SF"/>
</dbReference>
<dbReference type="InterPro" id="IPR014721">
    <property type="entry name" value="Ribsml_uS5_D2-typ_fold_subgr"/>
</dbReference>
<dbReference type="NCBIfam" id="TIGR00154">
    <property type="entry name" value="ispE"/>
    <property type="match status" value="1"/>
</dbReference>
<dbReference type="PANTHER" id="PTHR43527">
    <property type="entry name" value="4-DIPHOSPHOCYTIDYL-2-C-METHYL-D-ERYTHRITOL KINASE, CHLOROPLASTIC"/>
    <property type="match status" value="1"/>
</dbReference>
<dbReference type="PANTHER" id="PTHR43527:SF2">
    <property type="entry name" value="4-DIPHOSPHOCYTIDYL-2-C-METHYL-D-ERYTHRITOL KINASE, CHLOROPLASTIC"/>
    <property type="match status" value="1"/>
</dbReference>
<dbReference type="Pfam" id="PF08544">
    <property type="entry name" value="GHMP_kinases_C"/>
    <property type="match status" value="1"/>
</dbReference>
<dbReference type="Pfam" id="PF00288">
    <property type="entry name" value="GHMP_kinases_N"/>
    <property type="match status" value="1"/>
</dbReference>
<dbReference type="PIRSF" id="PIRSF010376">
    <property type="entry name" value="IspE"/>
    <property type="match status" value="1"/>
</dbReference>
<dbReference type="SUPFAM" id="SSF55060">
    <property type="entry name" value="GHMP Kinase, C-terminal domain"/>
    <property type="match status" value="1"/>
</dbReference>
<dbReference type="SUPFAM" id="SSF54211">
    <property type="entry name" value="Ribosomal protein S5 domain 2-like"/>
    <property type="match status" value="1"/>
</dbReference>
<name>ISPE_CHLL2</name>
<proteinExistence type="inferred from homology"/>
<organism>
    <name type="scientific">Chlorobium limicola (strain DSM 245 / NBRC 103803 / 6330)</name>
    <dbReference type="NCBI Taxonomy" id="290315"/>
    <lineage>
        <taxon>Bacteria</taxon>
        <taxon>Pseudomonadati</taxon>
        <taxon>Chlorobiota</taxon>
        <taxon>Chlorobiia</taxon>
        <taxon>Chlorobiales</taxon>
        <taxon>Chlorobiaceae</taxon>
        <taxon>Chlorobium/Pelodictyon group</taxon>
        <taxon>Chlorobium</taxon>
    </lineage>
</organism>
<keyword id="KW-0067">ATP-binding</keyword>
<keyword id="KW-0414">Isoprene biosynthesis</keyword>
<keyword id="KW-0418">Kinase</keyword>
<keyword id="KW-0547">Nucleotide-binding</keyword>
<keyword id="KW-0808">Transferase</keyword>
<feature type="chain" id="PRO_1000092070" description="4-diphosphocytidyl-2-C-methyl-D-erythritol kinase">
    <location>
        <begin position="1"/>
        <end position="288"/>
    </location>
</feature>
<feature type="active site" evidence="1">
    <location>
        <position position="11"/>
    </location>
</feature>
<feature type="active site" evidence="1">
    <location>
        <position position="135"/>
    </location>
</feature>
<feature type="binding site" evidence="1">
    <location>
        <begin position="93"/>
        <end position="103"/>
    </location>
    <ligand>
        <name>ATP</name>
        <dbReference type="ChEBI" id="CHEBI:30616"/>
    </ligand>
</feature>